<sequence length="121" mass="13110">MQYVYIFIGGALGALLRYLISFLNTDGGFPIGTLVANLTGAFIMGLLTALTIAFFSNHPTLKKAITTGFLGALTTFSTFQLELIHMFDHQQFITLLLYAITSYVFGILLCYVGIKLGGGLS</sequence>
<keyword id="KW-1003">Cell membrane</keyword>
<keyword id="KW-0407">Ion channel</keyword>
<keyword id="KW-0406">Ion transport</keyword>
<keyword id="KW-0472">Membrane</keyword>
<keyword id="KW-0479">Metal-binding</keyword>
<keyword id="KW-0915">Sodium</keyword>
<keyword id="KW-0812">Transmembrane</keyword>
<keyword id="KW-1133">Transmembrane helix</keyword>
<keyword id="KW-0813">Transport</keyword>
<protein>
    <recommendedName>
        <fullName evidence="1">Fluoride-specific ion channel FluC 1</fullName>
    </recommendedName>
</protein>
<dbReference type="EMBL" id="AJ938182">
    <property type="protein sequence ID" value="CAI81330.1"/>
    <property type="molecule type" value="Genomic_DNA"/>
</dbReference>
<dbReference type="RefSeq" id="WP_001200547.1">
    <property type="nucleotide sequence ID" value="NC_007622.1"/>
</dbReference>
<dbReference type="SMR" id="Q2YTK5"/>
<dbReference type="KEGG" id="sab:SAB1641"/>
<dbReference type="HOGENOM" id="CLU_114342_3_2_9"/>
<dbReference type="GO" id="GO:0005886">
    <property type="term" value="C:plasma membrane"/>
    <property type="evidence" value="ECO:0007669"/>
    <property type="project" value="UniProtKB-SubCell"/>
</dbReference>
<dbReference type="GO" id="GO:0062054">
    <property type="term" value="F:fluoride channel activity"/>
    <property type="evidence" value="ECO:0007669"/>
    <property type="project" value="UniProtKB-UniRule"/>
</dbReference>
<dbReference type="GO" id="GO:0046872">
    <property type="term" value="F:metal ion binding"/>
    <property type="evidence" value="ECO:0007669"/>
    <property type="project" value="UniProtKB-KW"/>
</dbReference>
<dbReference type="GO" id="GO:0140114">
    <property type="term" value="P:cellular detoxification of fluoride"/>
    <property type="evidence" value="ECO:0007669"/>
    <property type="project" value="UniProtKB-UniRule"/>
</dbReference>
<dbReference type="HAMAP" id="MF_00454">
    <property type="entry name" value="FluC"/>
    <property type="match status" value="1"/>
</dbReference>
<dbReference type="InterPro" id="IPR003691">
    <property type="entry name" value="FluC"/>
</dbReference>
<dbReference type="NCBIfam" id="TIGR00494">
    <property type="entry name" value="crcB"/>
    <property type="match status" value="1"/>
</dbReference>
<dbReference type="NCBIfam" id="NF010797">
    <property type="entry name" value="PRK14201.1"/>
    <property type="match status" value="1"/>
</dbReference>
<dbReference type="PANTHER" id="PTHR28259">
    <property type="entry name" value="FLUORIDE EXPORT PROTEIN 1-RELATED"/>
    <property type="match status" value="1"/>
</dbReference>
<dbReference type="PANTHER" id="PTHR28259:SF16">
    <property type="entry name" value="FLUORIDE-SPECIFIC ION CHANNEL FLUC 2"/>
    <property type="match status" value="1"/>
</dbReference>
<dbReference type="Pfam" id="PF02537">
    <property type="entry name" value="CRCB"/>
    <property type="match status" value="1"/>
</dbReference>
<gene>
    <name evidence="1" type="primary">fluC1</name>
    <name evidence="1" type="synonym">crcB1</name>
    <name type="ordered locus">SAB1641</name>
</gene>
<comment type="function">
    <text evidence="1">Fluoride-specific ion channel. Important for reducing fluoride concentration in the cell, thus reducing its toxicity.</text>
</comment>
<comment type="catalytic activity">
    <reaction evidence="1">
        <text>fluoride(in) = fluoride(out)</text>
        <dbReference type="Rhea" id="RHEA:76159"/>
        <dbReference type="ChEBI" id="CHEBI:17051"/>
    </reaction>
    <physiologicalReaction direction="left-to-right" evidence="1">
        <dbReference type="Rhea" id="RHEA:76160"/>
    </physiologicalReaction>
</comment>
<comment type="activity regulation">
    <text evidence="1">Na(+) is not transported, but it plays an essential structural role and its presence is essential for fluoride channel function.</text>
</comment>
<comment type="subcellular location">
    <subcellularLocation>
        <location evidence="1">Cell membrane</location>
        <topology evidence="1">Multi-pass membrane protein</topology>
    </subcellularLocation>
</comment>
<comment type="similarity">
    <text evidence="1">Belongs to the fluoride channel Fluc/FEX (TC 1.A.43) family.</text>
</comment>
<reference key="1">
    <citation type="journal article" date="2007" name="PLoS ONE">
        <title>Molecular correlates of host specialization in Staphylococcus aureus.</title>
        <authorList>
            <person name="Herron-Olson L."/>
            <person name="Fitzgerald J.R."/>
            <person name="Musser J.M."/>
            <person name="Kapur V."/>
        </authorList>
    </citation>
    <scope>NUCLEOTIDE SEQUENCE [LARGE SCALE GENOMIC DNA]</scope>
    <source>
        <strain>bovine RF122 / ET3-1</strain>
    </source>
</reference>
<organism>
    <name type="scientific">Staphylococcus aureus (strain bovine RF122 / ET3-1)</name>
    <dbReference type="NCBI Taxonomy" id="273036"/>
    <lineage>
        <taxon>Bacteria</taxon>
        <taxon>Bacillati</taxon>
        <taxon>Bacillota</taxon>
        <taxon>Bacilli</taxon>
        <taxon>Bacillales</taxon>
        <taxon>Staphylococcaceae</taxon>
        <taxon>Staphylococcus</taxon>
    </lineage>
</organism>
<proteinExistence type="inferred from homology"/>
<accession>Q2YTK5</accession>
<evidence type="ECO:0000255" key="1">
    <source>
        <dbReference type="HAMAP-Rule" id="MF_00454"/>
    </source>
</evidence>
<name>FLUC1_STAAB</name>
<feature type="chain" id="PRO_0000252941" description="Fluoride-specific ion channel FluC 1">
    <location>
        <begin position="1"/>
        <end position="121"/>
    </location>
</feature>
<feature type="transmembrane region" description="Helical" evidence="1">
    <location>
        <begin position="3"/>
        <end position="23"/>
    </location>
</feature>
<feature type="transmembrane region" description="Helical" evidence="1">
    <location>
        <begin position="35"/>
        <end position="55"/>
    </location>
</feature>
<feature type="transmembrane region" description="Helical" evidence="1">
    <location>
        <begin position="64"/>
        <end position="84"/>
    </location>
</feature>
<feature type="transmembrane region" description="Helical" evidence="1">
    <location>
        <begin position="92"/>
        <end position="112"/>
    </location>
</feature>
<feature type="binding site" evidence="1">
    <location>
        <position position="71"/>
    </location>
    <ligand>
        <name>Na(+)</name>
        <dbReference type="ChEBI" id="CHEBI:29101"/>
        <note>structural</note>
    </ligand>
</feature>
<feature type="binding site" evidence="1">
    <location>
        <position position="74"/>
    </location>
    <ligand>
        <name>Na(+)</name>
        <dbReference type="ChEBI" id="CHEBI:29101"/>
        <note>structural</note>
    </ligand>
</feature>